<sequence>MDKIKQLFANNYSWAQRMKEENSTYFKELADHQTPHYLWIGCSDSRVPAEKLTNLEPGELFVHRNVANQVIHTDFNCLSVVQYAVDVLKIEHIIICGHTNCGGIHAAMADKDLGLINNWLLHIRDIWFKHGHLLGKLSPEKRADMLTKINVAEQVYNLGRTSIVKSAWERGQKLSLHGWVYDVNDGFLVDQGVMATSRETLEISYRNAIARLSILDEENILKKDHLENT</sequence>
<reference key="1">
    <citation type="journal article" date="1995" name="Science">
        <title>Whole-genome random sequencing and assembly of Haemophilus influenzae Rd.</title>
        <authorList>
            <person name="Fleischmann R.D."/>
            <person name="Adams M.D."/>
            <person name="White O."/>
            <person name="Clayton R.A."/>
            <person name="Kirkness E.F."/>
            <person name="Kerlavage A.R."/>
            <person name="Bult C.J."/>
            <person name="Tomb J.-F."/>
            <person name="Dougherty B.A."/>
            <person name="Merrick J.M."/>
            <person name="McKenney K."/>
            <person name="Sutton G.G."/>
            <person name="FitzHugh W."/>
            <person name="Fields C.A."/>
            <person name="Gocayne J.D."/>
            <person name="Scott J.D."/>
            <person name="Shirley R."/>
            <person name="Liu L.-I."/>
            <person name="Glodek A."/>
            <person name="Kelley J.M."/>
            <person name="Weidman J.F."/>
            <person name="Phillips C.A."/>
            <person name="Spriggs T."/>
            <person name="Hedblom E."/>
            <person name="Cotton M.D."/>
            <person name="Utterback T.R."/>
            <person name="Hanna M.C."/>
            <person name="Nguyen D.T."/>
            <person name="Saudek D.M."/>
            <person name="Brandon R.C."/>
            <person name="Fine L.D."/>
            <person name="Fritchman J.L."/>
            <person name="Fuhrmann J.L."/>
            <person name="Geoghagen N.S.M."/>
            <person name="Gnehm C.L."/>
            <person name="McDonald L.A."/>
            <person name="Small K.V."/>
            <person name="Fraser C.M."/>
            <person name="Smith H.O."/>
            <person name="Venter J.C."/>
        </authorList>
    </citation>
    <scope>NUCLEOTIDE SEQUENCE [LARGE SCALE GENOMIC DNA]</scope>
    <source>
        <strain>ATCC 51907 / DSM 11121 / KW20 / Rd</strain>
    </source>
</reference>
<reference key="2">
    <citation type="journal article" date="2006" name="Biochemistry">
        <title>Identification of a novel noncatalytic bicarbonate binding site in eubacterial beta-carbonic anhydrase.</title>
        <authorList>
            <person name="Cronk J.D."/>
            <person name="Rowlett R.S."/>
            <person name="Zhang K.Y."/>
            <person name="Tu C."/>
            <person name="Endrizzi J.A."/>
            <person name="Lee J."/>
            <person name="Gareiss P.C."/>
            <person name="Preiss J.R."/>
        </authorList>
    </citation>
    <scope>X-RAY CRYSTALLOGRAPHY (2.20 ANGSTROMS) IN COMPLEX WITH ZINC ION</scope>
    <scope>CATALYTIC ACTIVITY</scope>
    <scope>COFACTOR</scope>
</reference>
<dbReference type="EC" id="4.2.1.1" evidence="1"/>
<dbReference type="EMBL" id="L42023">
    <property type="protein sequence ID" value="AAC22946.1"/>
    <property type="molecule type" value="Genomic_DNA"/>
</dbReference>
<dbReference type="PIR" id="F64170">
    <property type="entry name" value="F64170"/>
</dbReference>
<dbReference type="RefSeq" id="NP_439452.1">
    <property type="nucleotide sequence ID" value="NC_000907.1"/>
</dbReference>
<dbReference type="PDB" id="2A8C">
    <property type="method" value="X-ray"/>
    <property type="resolution" value="2.30 A"/>
    <property type="chains" value="A/B/C/D/E/F=1-229"/>
</dbReference>
<dbReference type="PDB" id="2A8D">
    <property type="method" value="X-ray"/>
    <property type="resolution" value="2.20 A"/>
    <property type="chains" value="A/B/C/D/E/F=1-229"/>
</dbReference>
<dbReference type="PDB" id="3E1V">
    <property type="method" value="X-ray"/>
    <property type="resolution" value="2.80 A"/>
    <property type="chains" value="A/B=1-229"/>
</dbReference>
<dbReference type="PDB" id="3E1W">
    <property type="method" value="X-ray"/>
    <property type="resolution" value="2.60 A"/>
    <property type="chains" value="A/B=1-229"/>
</dbReference>
<dbReference type="PDB" id="3E24">
    <property type="method" value="X-ray"/>
    <property type="resolution" value="2.30 A"/>
    <property type="chains" value="A/B=1-229"/>
</dbReference>
<dbReference type="PDB" id="3E28">
    <property type="method" value="X-ray"/>
    <property type="resolution" value="2.50 A"/>
    <property type="chains" value="A/B/C/D/E/F=1-229"/>
</dbReference>
<dbReference type="PDB" id="3E2A">
    <property type="method" value="X-ray"/>
    <property type="resolution" value="2.30 A"/>
    <property type="chains" value="A/B/C/D/E/F=1-229"/>
</dbReference>
<dbReference type="PDB" id="3E2W">
    <property type="method" value="X-ray"/>
    <property type="resolution" value="2.30 A"/>
    <property type="chains" value="A/B/C/D/E/F=1-229"/>
</dbReference>
<dbReference type="PDB" id="3E2X">
    <property type="method" value="X-ray"/>
    <property type="resolution" value="2.55 A"/>
    <property type="chains" value="A/B=1-229"/>
</dbReference>
<dbReference type="PDB" id="3E31">
    <property type="method" value="X-ray"/>
    <property type="resolution" value="2.95 A"/>
    <property type="chains" value="A/B=1-229"/>
</dbReference>
<dbReference type="PDB" id="3E3F">
    <property type="method" value="X-ray"/>
    <property type="resolution" value="2.30 A"/>
    <property type="chains" value="A/B=1-229"/>
</dbReference>
<dbReference type="PDB" id="3E3G">
    <property type="method" value="X-ray"/>
    <property type="resolution" value="2.30 A"/>
    <property type="chains" value="A/B/C/D/E/F=1-229"/>
</dbReference>
<dbReference type="PDB" id="3E3I">
    <property type="method" value="X-ray"/>
    <property type="resolution" value="2.00 A"/>
    <property type="chains" value="A/B/C/D/E/F/G/H/I/J/K/L=1-229"/>
</dbReference>
<dbReference type="PDB" id="3MF3">
    <property type="method" value="X-ray"/>
    <property type="resolution" value="2.50 A"/>
    <property type="chains" value="A/B/C/D/E/F=1-221"/>
</dbReference>
<dbReference type="PDB" id="4WAJ">
    <property type="method" value="X-ray"/>
    <property type="resolution" value="2.70 A"/>
    <property type="chains" value="A/B=1-229"/>
</dbReference>
<dbReference type="PDB" id="4WAK">
    <property type="method" value="X-ray"/>
    <property type="resolution" value="2.49 A"/>
    <property type="chains" value="A/B=1-229"/>
</dbReference>
<dbReference type="PDB" id="4WAM">
    <property type="method" value="X-ray"/>
    <property type="resolution" value="2.20 A"/>
    <property type="chains" value="A/B=1-229"/>
</dbReference>
<dbReference type="PDBsum" id="2A8C"/>
<dbReference type="PDBsum" id="2A8D"/>
<dbReference type="PDBsum" id="3E1V"/>
<dbReference type="PDBsum" id="3E1W"/>
<dbReference type="PDBsum" id="3E24"/>
<dbReference type="PDBsum" id="3E28"/>
<dbReference type="PDBsum" id="3E2A"/>
<dbReference type="PDBsum" id="3E2W"/>
<dbReference type="PDBsum" id="3E2X"/>
<dbReference type="PDBsum" id="3E31"/>
<dbReference type="PDBsum" id="3E3F"/>
<dbReference type="PDBsum" id="3E3G"/>
<dbReference type="PDBsum" id="3E3I"/>
<dbReference type="PDBsum" id="3MF3"/>
<dbReference type="PDBsum" id="4WAJ"/>
<dbReference type="PDBsum" id="4WAK"/>
<dbReference type="PDBsum" id="4WAM"/>
<dbReference type="SMR" id="P45148"/>
<dbReference type="STRING" id="71421.HI_1301"/>
<dbReference type="EnsemblBacteria" id="AAC22946">
    <property type="protein sequence ID" value="AAC22946"/>
    <property type="gene ID" value="HI_1301"/>
</dbReference>
<dbReference type="KEGG" id="hin:HI_1301"/>
<dbReference type="PATRIC" id="fig|71421.8.peg.1353"/>
<dbReference type="eggNOG" id="COG0288">
    <property type="taxonomic scope" value="Bacteria"/>
</dbReference>
<dbReference type="HOGENOM" id="CLU_053879_3_0_6"/>
<dbReference type="OrthoDB" id="9797527at2"/>
<dbReference type="PhylomeDB" id="P45148"/>
<dbReference type="BioCyc" id="HINF71421:G1GJ1-1326-MONOMER"/>
<dbReference type="BRENDA" id="4.2.1.1">
    <property type="organism ID" value="2529"/>
</dbReference>
<dbReference type="EvolutionaryTrace" id="P45148"/>
<dbReference type="Proteomes" id="UP000000579">
    <property type="component" value="Chromosome"/>
</dbReference>
<dbReference type="GO" id="GO:0004089">
    <property type="term" value="F:carbonate dehydratase activity"/>
    <property type="evidence" value="ECO:0000314"/>
    <property type="project" value="UniProtKB"/>
</dbReference>
<dbReference type="GO" id="GO:0008270">
    <property type="term" value="F:zinc ion binding"/>
    <property type="evidence" value="ECO:0000314"/>
    <property type="project" value="UniProtKB"/>
</dbReference>
<dbReference type="GO" id="GO:0015976">
    <property type="term" value="P:carbon utilization"/>
    <property type="evidence" value="ECO:0000314"/>
    <property type="project" value="UniProtKB"/>
</dbReference>
<dbReference type="CDD" id="cd00883">
    <property type="entry name" value="beta_CA_cladeA"/>
    <property type="match status" value="1"/>
</dbReference>
<dbReference type="FunFam" id="3.40.1050.10:FF:000001">
    <property type="entry name" value="Carbonic anhydrase"/>
    <property type="match status" value="1"/>
</dbReference>
<dbReference type="Gene3D" id="3.40.1050.10">
    <property type="entry name" value="Carbonic anhydrase"/>
    <property type="match status" value="1"/>
</dbReference>
<dbReference type="InterPro" id="IPR001765">
    <property type="entry name" value="Carbonic_anhydrase"/>
</dbReference>
<dbReference type="InterPro" id="IPR015892">
    <property type="entry name" value="Carbonic_anhydrase_CS"/>
</dbReference>
<dbReference type="InterPro" id="IPR036874">
    <property type="entry name" value="Carbonic_anhydrase_sf"/>
</dbReference>
<dbReference type="NCBIfam" id="NF007756">
    <property type="entry name" value="PRK10437.1"/>
    <property type="match status" value="1"/>
</dbReference>
<dbReference type="PANTHER" id="PTHR11002">
    <property type="entry name" value="CARBONIC ANHYDRASE"/>
    <property type="match status" value="1"/>
</dbReference>
<dbReference type="PANTHER" id="PTHR11002:SF76">
    <property type="entry name" value="CARBONIC ANHYDRASE"/>
    <property type="match status" value="1"/>
</dbReference>
<dbReference type="Pfam" id="PF00484">
    <property type="entry name" value="Pro_CA"/>
    <property type="match status" value="1"/>
</dbReference>
<dbReference type="SMART" id="SM00947">
    <property type="entry name" value="Pro_CA"/>
    <property type="match status" value="1"/>
</dbReference>
<dbReference type="SUPFAM" id="SSF53056">
    <property type="entry name" value="beta-carbonic anhydrase, cab"/>
    <property type="match status" value="1"/>
</dbReference>
<dbReference type="PROSITE" id="PS00704">
    <property type="entry name" value="PROK_CO2_ANHYDRASE_1"/>
    <property type="match status" value="1"/>
</dbReference>
<dbReference type="PROSITE" id="PS00705">
    <property type="entry name" value="PROK_CO2_ANHYDRASE_2"/>
    <property type="match status" value="1"/>
</dbReference>
<protein>
    <recommendedName>
        <fullName>Carbonic anhydrase 2</fullName>
        <ecNumber evidence="1">4.2.1.1</ecNumber>
    </recommendedName>
    <alternativeName>
        <fullName>Carbonate dehydratase 2</fullName>
    </alternativeName>
</protein>
<proteinExistence type="evidence at protein level"/>
<evidence type="ECO:0000269" key="1">
    <source>
    </source>
</evidence>
<evidence type="ECO:0000305" key="2"/>
<evidence type="ECO:0007744" key="3">
    <source>
        <dbReference type="PDB" id="2A8C"/>
    </source>
</evidence>
<evidence type="ECO:0007744" key="4">
    <source>
        <dbReference type="PDB" id="2A8D"/>
    </source>
</evidence>
<evidence type="ECO:0007829" key="5">
    <source>
        <dbReference type="PDB" id="2A8D"/>
    </source>
</evidence>
<evidence type="ECO:0007829" key="6">
    <source>
        <dbReference type="PDB" id="3E2X"/>
    </source>
</evidence>
<evidence type="ECO:0007829" key="7">
    <source>
        <dbReference type="PDB" id="3E31"/>
    </source>
</evidence>
<evidence type="ECO:0007829" key="8">
    <source>
        <dbReference type="PDB" id="3E3I"/>
    </source>
</evidence>
<evidence type="ECO:0007829" key="9">
    <source>
        <dbReference type="PDB" id="4WAJ"/>
    </source>
</evidence>
<accession>P45148</accession>
<keyword id="KW-0002">3D-structure</keyword>
<keyword id="KW-0456">Lyase</keyword>
<keyword id="KW-0479">Metal-binding</keyword>
<keyword id="KW-1185">Reference proteome</keyword>
<keyword id="KW-0862">Zinc</keyword>
<organism>
    <name type="scientific">Haemophilus influenzae (strain ATCC 51907 / DSM 11121 / KW20 / Rd)</name>
    <dbReference type="NCBI Taxonomy" id="71421"/>
    <lineage>
        <taxon>Bacteria</taxon>
        <taxon>Pseudomonadati</taxon>
        <taxon>Pseudomonadota</taxon>
        <taxon>Gammaproteobacteria</taxon>
        <taxon>Pasteurellales</taxon>
        <taxon>Pasteurellaceae</taxon>
        <taxon>Haemophilus</taxon>
    </lineage>
</organism>
<gene>
    <name type="primary">can</name>
    <name type="ordered locus">HI_1301</name>
</gene>
<feature type="chain" id="PRO_0000077467" description="Carbonic anhydrase 2">
    <location>
        <begin position="1"/>
        <end position="229"/>
    </location>
</feature>
<feature type="binding site" evidence="1 3 4">
    <location>
        <position position="42"/>
    </location>
    <ligand>
        <name>Zn(2+)</name>
        <dbReference type="ChEBI" id="CHEBI:29105"/>
    </ligand>
</feature>
<feature type="binding site" evidence="1 3 4">
    <location>
        <position position="44"/>
    </location>
    <ligand>
        <name>Zn(2+)</name>
        <dbReference type="ChEBI" id="CHEBI:29105"/>
    </ligand>
</feature>
<feature type="binding site" evidence="1 3 4">
    <location>
        <position position="98"/>
    </location>
    <ligand>
        <name>Zn(2+)</name>
        <dbReference type="ChEBI" id="CHEBI:29105"/>
    </ligand>
</feature>
<feature type="binding site" evidence="1 3 4">
    <location>
        <position position="101"/>
    </location>
    <ligand>
        <name>Zn(2+)</name>
        <dbReference type="ChEBI" id="CHEBI:29105"/>
    </ligand>
</feature>
<feature type="helix" evidence="8">
    <location>
        <begin position="2"/>
        <end position="20"/>
    </location>
</feature>
<feature type="turn" evidence="9">
    <location>
        <begin position="21"/>
        <end position="24"/>
    </location>
</feature>
<feature type="helix" evidence="5">
    <location>
        <begin position="25"/>
        <end position="31"/>
    </location>
</feature>
<feature type="strand" evidence="8">
    <location>
        <begin position="37"/>
        <end position="42"/>
    </location>
</feature>
<feature type="turn" evidence="7">
    <location>
        <begin position="43"/>
        <end position="45"/>
    </location>
</feature>
<feature type="helix" evidence="8">
    <location>
        <begin position="49"/>
        <end position="53"/>
    </location>
</feature>
<feature type="strand" evidence="8">
    <location>
        <begin position="59"/>
        <end position="65"/>
    </location>
</feature>
<feature type="helix" evidence="6">
    <location>
        <begin position="66"/>
        <end position="68"/>
    </location>
</feature>
<feature type="helix" evidence="8">
    <location>
        <begin position="75"/>
        <end position="86"/>
    </location>
</feature>
<feature type="strand" evidence="8">
    <location>
        <begin position="92"/>
        <end position="100"/>
    </location>
</feature>
<feature type="helix" evidence="8">
    <location>
        <begin position="102"/>
        <end position="108"/>
    </location>
</feature>
<feature type="helix" evidence="8">
    <location>
        <begin position="116"/>
        <end position="129"/>
    </location>
</feature>
<feature type="helix" evidence="8">
    <location>
        <begin position="131"/>
        <end position="135"/>
    </location>
</feature>
<feature type="helix" evidence="8">
    <location>
        <begin position="139"/>
        <end position="141"/>
    </location>
</feature>
<feature type="helix" evidence="8">
    <location>
        <begin position="142"/>
        <end position="159"/>
    </location>
</feature>
<feature type="helix" evidence="8">
    <location>
        <begin position="162"/>
        <end position="169"/>
    </location>
</feature>
<feature type="strand" evidence="8">
    <location>
        <begin position="175"/>
        <end position="181"/>
    </location>
</feature>
<feature type="turn" evidence="8">
    <location>
        <begin position="183"/>
        <end position="185"/>
    </location>
</feature>
<feature type="strand" evidence="8">
    <location>
        <begin position="188"/>
        <end position="197"/>
    </location>
</feature>
<feature type="helix" evidence="8">
    <location>
        <begin position="198"/>
        <end position="212"/>
    </location>
</feature>
<feature type="helix" evidence="5">
    <location>
        <begin position="217"/>
        <end position="219"/>
    </location>
</feature>
<comment type="catalytic activity">
    <reaction evidence="1">
        <text>hydrogencarbonate + H(+) = CO2 + H2O</text>
        <dbReference type="Rhea" id="RHEA:10748"/>
        <dbReference type="ChEBI" id="CHEBI:15377"/>
        <dbReference type="ChEBI" id="CHEBI:15378"/>
        <dbReference type="ChEBI" id="CHEBI:16526"/>
        <dbReference type="ChEBI" id="CHEBI:17544"/>
        <dbReference type="EC" id="4.2.1.1"/>
    </reaction>
</comment>
<comment type="cofactor">
    <cofactor evidence="1">
        <name>Zn(2+)</name>
        <dbReference type="ChEBI" id="CHEBI:29105"/>
    </cofactor>
    <text evidence="1">Binds 1 zinc ion per subunit.</text>
</comment>
<comment type="similarity">
    <text evidence="2">Belongs to the beta-class carbonic anhydrase family.</text>
</comment>
<name>CAN_HAEIN</name>